<protein>
    <recommendedName>
        <fullName evidence="1">Catalase-peroxidase</fullName>
        <shortName evidence="1">CP</shortName>
        <ecNumber evidence="1">1.11.1.21</ecNumber>
    </recommendedName>
    <alternativeName>
        <fullName evidence="1">Peroxidase/catalase</fullName>
    </alternativeName>
</protein>
<feature type="chain" id="PRO_0000354853" description="Catalase-peroxidase">
    <location>
        <begin position="1"/>
        <end position="725"/>
    </location>
</feature>
<feature type="active site" description="Proton acceptor" evidence="1">
    <location>
        <position position="99"/>
    </location>
</feature>
<feature type="binding site" description="axial binding residue" evidence="1">
    <location>
        <position position="267"/>
    </location>
    <ligand>
        <name>heme b</name>
        <dbReference type="ChEBI" id="CHEBI:60344"/>
    </ligand>
    <ligandPart>
        <name>Fe</name>
        <dbReference type="ChEBI" id="CHEBI:18248"/>
    </ligandPart>
</feature>
<feature type="site" description="Transition state stabilizer" evidence="1">
    <location>
        <position position="95"/>
    </location>
</feature>
<feature type="cross-link" description="Tryptophyl-tyrosyl-methioninium (Trp-Tyr) (with M-252)" evidence="1">
    <location>
        <begin position="98"/>
        <end position="226"/>
    </location>
</feature>
<feature type="cross-link" description="Tryptophyl-tyrosyl-methioninium (Tyr-Met) (with W-98)" evidence="1">
    <location>
        <begin position="226"/>
        <end position="252"/>
    </location>
</feature>
<dbReference type="EC" id="1.11.1.21" evidence="1"/>
<dbReference type="EMBL" id="CP000489">
    <property type="protein sequence ID" value="ABL70584.1"/>
    <property type="molecule type" value="Genomic_DNA"/>
</dbReference>
<dbReference type="RefSeq" id="WP_011748777.1">
    <property type="nucleotide sequence ID" value="NC_008686.1"/>
</dbReference>
<dbReference type="SMR" id="A1B4Z0"/>
<dbReference type="STRING" id="318586.Pden_2497"/>
<dbReference type="PeroxiBase" id="3626">
    <property type="entry name" value="PdeCP01_PD1222"/>
</dbReference>
<dbReference type="EnsemblBacteria" id="ABL70584">
    <property type="protein sequence ID" value="ABL70584"/>
    <property type="gene ID" value="Pden_2497"/>
</dbReference>
<dbReference type="GeneID" id="93450890"/>
<dbReference type="KEGG" id="pde:Pden_2497"/>
<dbReference type="eggNOG" id="COG0376">
    <property type="taxonomic scope" value="Bacteria"/>
</dbReference>
<dbReference type="HOGENOM" id="CLU_025424_2_0_5"/>
<dbReference type="OrthoDB" id="9759743at2"/>
<dbReference type="Proteomes" id="UP000000361">
    <property type="component" value="Chromosome 1"/>
</dbReference>
<dbReference type="GO" id="GO:0005829">
    <property type="term" value="C:cytosol"/>
    <property type="evidence" value="ECO:0007669"/>
    <property type="project" value="TreeGrafter"/>
</dbReference>
<dbReference type="GO" id="GO:0004096">
    <property type="term" value="F:catalase activity"/>
    <property type="evidence" value="ECO:0007669"/>
    <property type="project" value="UniProtKB-UniRule"/>
</dbReference>
<dbReference type="GO" id="GO:0020037">
    <property type="term" value="F:heme binding"/>
    <property type="evidence" value="ECO:0007669"/>
    <property type="project" value="InterPro"/>
</dbReference>
<dbReference type="GO" id="GO:0046872">
    <property type="term" value="F:metal ion binding"/>
    <property type="evidence" value="ECO:0007669"/>
    <property type="project" value="UniProtKB-KW"/>
</dbReference>
<dbReference type="GO" id="GO:0070301">
    <property type="term" value="P:cellular response to hydrogen peroxide"/>
    <property type="evidence" value="ECO:0007669"/>
    <property type="project" value="TreeGrafter"/>
</dbReference>
<dbReference type="GO" id="GO:0042744">
    <property type="term" value="P:hydrogen peroxide catabolic process"/>
    <property type="evidence" value="ECO:0007669"/>
    <property type="project" value="UniProtKB-KW"/>
</dbReference>
<dbReference type="CDD" id="cd00649">
    <property type="entry name" value="catalase_peroxidase_1"/>
    <property type="match status" value="1"/>
</dbReference>
<dbReference type="CDD" id="cd08200">
    <property type="entry name" value="catalase_peroxidase_2"/>
    <property type="match status" value="1"/>
</dbReference>
<dbReference type="FunFam" id="1.10.420.10:FF:000004">
    <property type="entry name" value="Catalase-peroxidase"/>
    <property type="match status" value="1"/>
</dbReference>
<dbReference type="FunFam" id="1.10.520.10:FF:000002">
    <property type="entry name" value="Catalase-peroxidase"/>
    <property type="match status" value="1"/>
</dbReference>
<dbReference type="Gene3D" id="1.10.520.10">
    <property type="match status" value="2"/>
</dbReference>
<dbReference type="Gene3D" id="1.10.420.10">
    <property type="entry name" value="Peroxidase, domain 2"/>
    <property type="match status" value="2"/>
</dbReference>
<dbReference type="HAMAP" id="MF_01961">
    <property type="entry name" value="Catal_peroxid"/>
    <property type="match status" value="1"/>
</dbReference>
<dbReference type="InterPro" id="IPR000763">
    <property type="entry name" value="Catalase_peroxidase"/>
</dbReference>
<dbReference type="InterPro" id="IPR002016">
    <property type="entry name" value="Haem_peroxidase"/>
</dbReference>
<dbReference type="InterPro" id="IPR010255">
    <property type="entry name" value="Haem_peroxidase_sf"/>
</dbReference>
<dbReference type="NCBIfam" id="TIGR00198">
    <property type="entry name" value="cat_per_HPI"/>
    <property type="match status" value="1"/>
</dbReference>
<dbReference type="NCBIfam" id="NF011635">
    <property type="entry name" value="PRK15061.1"/>
    <property type="match status" value="1"/>
</dbReference>
<dbReference type="PANTHER" id="PTHR30555:SF6">
    <property type="entry name" value="CATALASE-PEROXIDASE"/>
    <property type="match status" value="1"/>
</dbReference>
<dbReference type="PANTHER" id="PTHR30555">
    <property type="entry name" value="HYDROPEROXIDASE I, BIFUNCTIONAL CATALASE-PEROXIDASE"/>
    <property type="match status" value="1"/>
</dbReference>
<dbReference type="Pfam" id="PF00141">
    <property type="entry name" value="peroxidase"/>
    <property type="match status" value="2"/>
</dbReference>
<dbReference type="PRINTS" id="PR00460">
    <property type="entry name" value="BPEROXIDASE"/>
</dbReference>
<dbReference type="PRINTS" id="PR00458">
    <property type="entry name" value="PEROXIDASE"/>
</dbReference>
<dbReference type="SUPFAM" id="SSF48113">
    <property type="entry name" value="Heme-dependent peroxidases"/>
    <property type="match status" value="2"/>
</dbReference>
<dbReference type="PROSITE" id="PS50873">
    <property type="entry name" value="PEROXIDASE_4"/>
    <property type="match status" value="1"/>
</dbReference>
<accession>A1B4Z0</accession>
<sequence length="725" mass="79623">MDGNDIRSTGKCPVMHGGNTAMGSSVTAWWPNALNLDILHQHDSKTNPLGQDFNYSEELKKLDVEALKADLRALMTDSQDWWPADWGSYVGMFARTAWHMAGSYRTSDGRGGANTGNQRFAPLNSWPDNVNTDKGRRLLWPIKKKYGNKISWADLIVLAGTVAYEAAGLKTYGFAFGREDIWHPEKDTYWGEEKEWLAPSDSRYGDVTKAETLANPLAAVQMGLIYVNPEGVNGKSDPQATAYQMRETFARMGMNDEETVALTAGGHTVGKCHGNGNVTDLSPDPEAAGPEFQGLGWMNTKGRGIGRNTMVSGLEGAWTTHPTQWDNGFFEMLFKHEWTLTHSPAGASQWEPITIAEEDKPADVEDPSIRHMPMMTDADMALKVDPIYREISLRFMNDFEAFSDAFARAWFKLTHRDMGPKARYLGPDVPAEDLVWQDPIPAGRSDYDVAAVKARIAASGLSASDLVATAWDSARTYRGSDHRGGANGARIRLAPQKDWEGNEPQRLARVLSVLEPIAAETGASLADVIVLGGNLGVEQAAKAAGFDIEVPFAPGRGDSTAEQTDAASFDVLEPLADGFRNWQKQDYVVSPEEMLLDRAQLMGLTAPEMTTLIGGLRVIGTNHGGTKHGVFTQRKGALTNDFFVTLTDMANNWVPVGNNLYEIRDRKTGATRYTATRVDLVFGSNSILRAYAEVYAQDDNAGKFVRDFVAAWTKVMNADRFDLAA</sequence>
<name>KATG_PARDP</name>
<proteinExistence type="inferred from homology"/>
<reference key="1">
    <citation type="submission" date="2006-12" db="EMBL/GenBank/DDBJ databases">
        <title>Complete sequence of chromosome 1 of Paracoccus denitrificans PD1222.</title>
        <authorList>
            <person name="Copeland A."/>
            <person name="Lucas S."/>
            <person name="Lapidus A."/>
            <person name="Barry K."/>
            <person name="Detter J.C."/>
            <person name="Glavina del Rio T."/>
            <person name="Hammon N."/>
            <person name="Israni S."/>
            <person name="Dalin E."/>
            <person name="Tice H."/>
            <person name="Pitluck S."/>
            <person name="Munk A.C."/>
            <person name="Brettin T."/>
            <person name="Bruce D."/>
            <person name="Han C."/>
            <person name="Tapia R."/>
            <person name="Gilna P."/>
            <person name="Schmutz J."/>
            <person name="Larimer F."/>
            <person name="Land M."/>
            <person name="Hauser L."/>
            <person name="Kyrpides N."/>
            <person name="Lykidis A."/>
            <person name="Spiro S."/>
            <person name="Richardson D.J."/>
            <person name="Moir J.W.B."/>
            <person name="Ferguson S.J."/>
            <person name="van Spanning R.J.M."/>
            <person name="Richardson P."/>
        </authorList>
    </citation>
    <scope>NUCLEOTIDE SEQUENCE [LARGE SCALE GENOMIC DNA]</scope>
    <source>
        <strain>Pd 1222</strain>
    </source>
</reference>
<evidence type="ECO:0000255" key="1">
    <source>
        <dbReference type="HAMAP-Rule" id="MF_01961"/>
    </source>
</evidence>
<keyword id="KW-0349">Heme</keyword>
<keyword id="KW-0376">Hydrogen peroxide</keyword>
<keyword id="KW-0408">Iron</keyword>
<keyword id="KW-0479">Metal-binding</keyword>
<keyword id="KW-0560">Oxidoreductase</keyword>
<keyword id="KW-0575">Peroxidase</keyword>
<keyword id="KW-1185">Reference proteome</keyword>
<comment type="function">
    <text evidence="1">Bifunctional enzyme with both catalase and broad-spectrum peroxidase activity.</text>
</comment>
<comment type="catalytic activity">
    <reaction evidence="1">
        <text>H2O2 + AH2 = A + 2 H2O</text>
        <dbReference type="Rhea" id="RHEA:30275"/>
        <dbReference type="ChEBI" id="CHEBI:13193"/>
        <dbReference type="ChEBI" id="CHEBI:15377"/>
        <dbReference type="ChEBI" id="CHEBI:16240"/>
        <dbReference type="ChEBI" id="CHEBI:17499"/>
        <dbReference type="EC" id="1.11.1.21"/>
    </reaction>
</comment>
<comment type="catalytic activity">
    <reaction evidence="1">
        <text>2 H2O2 = O2 + 2 H2O</text>
        <dbReference type="Rhea" id="RHEA:20309"/>
        <dbReference type="ChEBI" id="CHEBI:15377"/>
        <dbReference type="ChEBI" id="CHEBI:15379"/>
        <dbReference type="ChEBI" id="CHEBI:16240"/>
        <dbReference type="EC" id="1.11.1.21"/>
    </reaction>
</comment>
<comment type="cofactor">
    <cofactor evidence="1">
        <name>heme b</name>
        <dbReference type="ChEBI" id="CHEBI:60344"/>
    </cofactor>
    <text evidence="1">Binds 1 heme b (iron(II)-protoporphyrin IX) group per dimer.</text>
</comment>
<comment type="subunit">
    <text evidence="1">Homodimer or homotetramer.</text>
</comment>
<comment type="PTM">
    <text evidence="1">Formation of the three residue Trp-Tyr-Met cross-link is important for the catalase, but not the peroxidase activity of the enzyme.</text>
</comment>
<comment type="similarity">
    <text evidence="1">Belongs to the peroxidase family. Peroxidase/catalase subfamily.</text>
</comment>
<gene>
    <name evidence="1" type="primary">katG</name>
    <name type="ordered locus">Pden_2497</name>
</gene>
<organism>
    <name type="scientific">Paracoccus denitrificans (strain Pd 1222)</name>
    <dbReference type="NCBI Taxonomy" id="318586"/>
    <lineage>
        <taxon>Bacteria</taxon>
        <taxon>Pseudomonadati</taxon>
        <taxon>Pseudomonadota</taxon>
        <taxon>Alphaproteobacteria</taxon>
        <taxon>Rhodobacterales</taxon>
        <taxon>Paracoccaceae</taxon>
        <taxon>Paracoccus</taxon>
    </lineage>
</organism>